<dbReference type="EMBL" id="AF494278">
    <property type="protein sequence ID" value="AAM96537.1"/>
    <property type="molecule type" value="Genomic_DNA"/>
</dbReference>
<dbReference type="RefSeq" id="NP_683788.1">
    <property type="nucleotide sequence ID" value="NC_004115.1"/>
</dbReference>
<dbReference type="SMR" id="Q8M9Z8"/>
<dbReference type="GeneID" id="860693"/>
<dbReference type="GO" id="GO:0009535">
    <property type="term" value="C:chloroplast thylakoid membrane"/>
    <property type="evidence" value="ECO:0007669"/>
    <property type="project" value="UniProtKB-SubCell"/>
</dbReference>
<dbReference type="GO" id="GO:0009522">
    <property type="term" value="C:photosystem I"/>
    <property type="evidence" value="ECO:0007669"/>
    <property type="project" value="UniProtKB-KW"/>
</dbReference>
<dbReference type="GO" id="GO:0015979">
    <property type="term" value="P:photosynthesis"/>
    <property type="evidence" value="ECO:0007669"/>
    <property type="project" value="UniProtKB-UniRule"/>
</dbReference>
<dbReference type="HAMAP" id="MF_00828">
    <property type="entry name" value="PSI_PsaM"/>
    <property type="match status" value="1"/>
</dbReference>
<dbReference type="InterPro" id="IPR010010">
    <property type="entry name" value="PSI_PsaM"/>
</dbReference>
<dbReference type="InterPro" id="IPR037279">
    <property type="entry name" value="PSI_PsaM_sf"/>
</dbReference>
<dbReference type="NCBIfam" id="TIGR03053">
    <property type="entry name" value="PS_I_psaM"/>
    <property type="match status" value="1"/>
</dbReference>
<dbReference type="Pfam" id="PF07465">
    <property type="entry name" value="PsaM"/>
    <property type="match status" value="1"/>
</dbReference>
<dbReference type="SUPFAM" id="SSF81548">
    <property type="entry name" value="Subunit XII of photosystem I reaction centre, PsaM"/>
    <property type="match status" value="1"/>
</dbReference>
<sequence length="32" mass="3402">MTAISDSQVYVALVSALITSFLAVRLGLALYD</sequence>
<proteinExistence type="inferred from homology"/>
<feature type="chain" id="PRO_0000277397" description="Photosystem I reaction center subunit XII">
    <location>
        <begin position="1"/>
        <end position="32"/>
    </location>
</feature>
<feature type="transmembrane region" description="Helical" evidence="1">
    <location>
        <begin position="9"/>
        <end position="31"/>
    </location>
</feature>
<reference key="1">
    <citation type="journal article" date="2002" name="Proc. Natl. Acad. Sci. U.S.A.">
        <title>The chloroplast and mitochondrial genome sequences of the charophyte Chaetosphaeridium globosum: insights into the timing of the events that restructured organelle DNAs within the green algal lineage that led to land plants.</title>
        <authorList>
            <person name="Turmel M."/>
            <person name="Otis C."/>
            <person name="Lemieux C."/>
        </authorList>
    </citation>
    <scope>NUCLEOTIDE SEQUENCE [LARGE SCALE GENOMIC DNA]</scope>
    <source>
        <strain>M1311</strain>
    </source>
</reference>
<keyword id="KW-0150">Chloroplast</keyword>
<keyword id="KW-0472">Membrane</keyword>
<keyword id="KW-0602">Photosynthesis</keyword>
<keyword id="KW-0603">Photosystem I</keyword>
<keyword id="KW-0934">Plastid</keyword>
<keyword id="KW-0793">Thylakoid</keyword>
<keyword id="KW-0812">Transmembrane</keyword>
<keyword id="KW-1133">Transmembrane helix</keyword>
<gene>
    <name evidence="1" type="primary">psaM</name>
</gene>
<geneLocation type="chloroplast"/>
<evidence type="ECO:0000255" key="1">
    <source>
        <dbReference type="HAMAP-Rule" id="MF_00828"/>
    </source>
</evidence>
<comment type="subcellular location">
    <subcellularLocation>
        <location evidence="1">Plastid</location>
        <location evidence="1">Chloroplast thylakoid membrane</location>
        <topology evidence="1">Single-pass membrane protein</topology>
    </subcellularLocation>
</comment>
<comment type="similarity">
    <text evidence="1">Belongs to the PsaM family.</text>
</comment>
<name>PSAM_CHAGL</name>
<organism>
    <name type="scientific">Chaetosphaeridium globosum</name>
    <name type="common">Charophycean green alga</name>
    <name type="synonym">Herposteiron globosum</name>
    <dbReference type="NCBI Taxonomy" id="96477"/>
    <lineage>
        <taxon>Eukaryota</taxon>
        <taxon>Viridiplantae</taxon>
        <taxon>Streptophyta</taxon>
        <taxon>Coleochaetophyceae</taxon>
        <taxon>Coleochaetales</taxon>
        <taxon>Chaetosphaeridiaceae</taxon>
        <taxon>Chaetosphaeridium</taxon>
    </lineage>
</organism>
<accession>Q8M9Z8</accession>
<protein>
    <recommendedName>
        <fullName evidence="1">Photosystem I reaction center subunit XII</fullName>
    </recommendedName>
    <alternativeName>
        <fullName evidence="1">PSI-M</fullName>
    </alternativeName>
</protein>